<dbReference type="EMBL" id="AK054935">
    <property type="protein sequence ID" value="BAB70830.1"/>
    <property type="molecule type" value="mRNA"/>
</dbReference>
<dbReference type="EMBL" id="AK289550">
    <property type="protein sequence ID" value="BAF82239.1"/>
    <property type="molecule type" value="mRNA"/>
</dbReference>
<dbReference type="EMBL" id="AC118344">
    <property type="status" value="NOT_ANNOTATED_CDS"/>
    <property type="molecule type" value="Genomic_DNA"/>
</dbReference>
<dbReference type="EMBL" id="CH471126">
    <property type="protein sequence ID" value="EAW56938.1"/>
    <property type="molecule type" value="Genomic_DNA"/>
</dbReference>
<dbReference type="EMBL" id="BC029539">
    <property type="protein sequence ID" value="AAH29539.1"/>
    <property type="molecule type" value="mRNA"/>
</dbReference>
<dbReference type="CCDS" id="CCDS12550.1">
    <molecule id="Q8N6N2-1"/>
</dbReference>
<dbReference type="RefSeq" id="NP_689692.2">
    <molecule id="Q8N6N2-1"/>
    <property type="nucleotide sequence ID" value="NM_152479.5"/>
</dbReference>
<dbReference type="SMR" id="Q8N6N2"/>
<dbReference type="BioGRID" id="127113">
    <property type="interactions" value="8"/>
</dbReference>
<dbReference type="FunCoup" id="Q8N6N2">
    <property type="interactions" value="18"/>
</dbReference>
<dbReference type="IntAct" id="Q8N6N2">
    <property type="interactions" value="6"/>
</dbReference>
<dbReference type="MINT" id="Q8N6N2"/>
<dbReference type="STRING" id="9606.ENSP00000311760"/>
<dbReference type="GlyGen" id="Q8N6N2">
    <property type="glycosylation" value="2 sites"/>
</dbReference>
<dbReference type="iPTMnet" id="Q8N6N2"/>
<dbReference type="PhosphoSitePlus" id="Q8N6N2"/>
<dbReference type="BioMuta" id="TTC9B"/>
<dbReference type="DMDM" id="74759948"/>
<dbReference type="MassIVE" id="Q8N6N2"/>
<dbReference type="PaxDb" id="9606-ENSP00000311760"/>
<dbReference type="PeptideAtlas" id="Q8N6N2"/>
<dbReference type="ProteomicsDB" id="72202">
    <molecule id="Q8N6N2-1"/>
</dbReference>
<dbReference type="ProteomicsDB" id="72203">
    <molecule id="Q8N6N2-2"/>
</dbReference>
<dbReference type="Antibodypedia" id="30476">
    <property type="antibodies" value="52 antibodies from 14 providers"/>
</dbReference>
<dbReference type="DNASU" id="148014"/>
<dbReference type="Ensembl" id="ENST00000311308.7">
    <molecule id="Q8N6N2-1"/>
    <property type="protein sequence ID" value="ENSP00000311760.6"/>
    <property type="gene ID" value="ENSG00000174521.8"/>
</dbReference>
<dbReference type="GeneID" id="148014"/>
<dbReference type="KEGG" id="hsa:148014"/>
<dbReference type="MANE-Select" id="ENST00000311308.7">
    <property type="protein sequence ID" value="ENSP00000311760.6"/>
    <property type="RefSeq nucleotide sequence ID" value="NM_152479.6"/>
    <property type="RefSeq protein sequence ID" value="NP_689692.2"/>
</dbReference>
<dbReference type="UCSC" id="uc002onc.3">
    <molecule id="Q8N6N2-1"/>
    <property type="organism name" value="human"/>
</dbReference>
<dbReference type="AGR" id="HGNC:26395"/>
<dbReference type="CTD" id="148014"/>
<dbReference type="DisGeNET" id="148014"/>
<dbReference type="GeneCards" id="TTC9B"/>
<dbReference type="HGNC" id="HGNC:26395">
    <property type="gene designation" value="TTC9B"/>
</dbReference>
<dbReference type="HPA" id="ENSG00000174521">
    <property type="expression patterns" value="Tissue enriched (brain)"/>
</dbReference>
<dbReference type="neXtProt" id="NX_Q8N6N2"/>
<dbReference type="OpenTargets" id="ENSG00000174521"/>
<dbReference type="PharmGKB" id="PA142670684"/>
<dbReference type="VEuPathDB" id="HostDB:ENSG00000174521"/>
<dbReference type="eggNOG" id="ENOG502QQHT">
    <property type="taxonomic scope" value="Eukaryota"/>
</dbReference>
<dbReference type="GeneTree" id="ENSGT00940000161494"/>
<dbReference type="HOGENOM" id="CLU_100621_1_0_1"/>
<dbReference type="InParanoid" id="Q8N6N2"/>
<dbReference type="OMA" id="RVREYCF"/>
<dbReference type="OrthoDB" id="433738at2759"/>
<dbReference type="PAN-GO" id="Q8N6N2">
    <property type="GO annotations" value="0 GO annotations based on evolutionary models"/>
</dbReference>
<dbReference type="PhylomeDB" id="Q8N6N2"/>
<dbReference type="TreeFam" id="TF331917"/>
<dbReference type="PathwayCommons" id="Q8N6N2"/>
<dbReference type="SignaLink" id="Q8N6N2"/>
<dbReference type="BioGRID-ORCS" id="148014">
    <property type="hits" value="9 hits in 1139 CRISPR screens"/>
</dbReference>
<dbReference type="GenomeRNAi" id="148014"/>
<dbReference type="Pharos" id="Q8N6N2">
    <property type="development level" value="Tdark"/>
</dbReference>
<dbReference type="PRO" id="PR:Q8N6N2"/>
<dbReference type="Proteomes" id="UP000005640">
    <property type="component" value="Chromosome 19"/>
</dbReference>
<dbReference type="RNAct" id="Q8N6N2">
    <property type="molecule type" value="protein"/>
</dbReference>
<dbReference type="Bgee" id="ENSG00000174521">
    <property type="expression patterns" value="Expressed in right hemisphere of cerebellum and 128 other cell types or tissues"/>
</dbReference>
<dbReference type="Gene3D" id="1.25.40.10">
    <property type="entry name" value="Tetratricopeptide repeat domain"/>
    <property type="match status" value="1"/>
</dbReference>
<dbReference type="InterPro" id="IPR039663">
    <property type="entry name" value="AIP/AIPL1/TTC9"/>
</dbReference>
<dbReference type="InterPro" id="IPR011990">
    <property type="entry name" value="TPR-like_helical_dom_sf"/>
</dbReference>
<dbReference type="InterPro" id="IPR013105">
    <property type="entry name" value="TPR_2"/>
</dbReference>
<dbReference type="InterPro" id="IPR019734">
    <property type="entry name" value="TPR_rpt"/>
</dbReference>
<dbReference type="PANTHER" id="PTHR11242">
    <property type="entry name" value="ARYL HYDROCARBON RECEPTOR INTERACTING PROTEIN RELATED"/>
    <property type="match status" value="1"/>
</dbReference>
<dbReference type="PANTHER" id="PTHR11242:SF13">
    <property type="entry name" value="TETRATRICOPEPTIDE REPEAT PROTEIN 9B"/>
    <property type="match status" value="1"/>
</dbReference>
<dbReference type="Pfam" id="PF07719">
    <property type="entry name" value="TPR_2"/>
    <property type="match status" value="1"/>
</dbReference>
<dbReference type="SMART" id="SM00028">
    <property type="entry name" value="TPR"/>
    <property type="match status" value="2"/>
</dbReference>
<dbReference type="SUPFAM" id="SSF48452">
    <property type="entry name" value="TPR-like"/>
    <property type="match status" value="1"/>
</dbReference>
<dbReference type="PROSITE" id="PS50005">
    <property type="entry name" value="TPR"/>
    <property type="match status" value="1"/>
</dbReference>
<dbReference type="PROSITE" id="PS50293">
    <property type="entry name" value="TPR_REGION"/>
    <property type="match status" value="1"/>
</dbReference>
<comment type="alternative products">
    <event type="alternative splicing"/>
    <isoform>
        <id>Q8N6N2-1</id>
        <name>1</name>
        <sequence type="displayed"/>
    </isoform>
    <isoform>
        <id>Q8N6N2-2</id>
        <name>2</name>
        <sequence type="described" ref="VSP_026650"/>
    </isoform>
</comment>
<comment type="miscellaneous">
    <molecule>Isoform 2</molecule>
    <text evidence="4">May be due to an intron retention.</text>
</comment>
<comment type="similarity">
    <text evidence="4">Belongs to the TTC9 family.</text>
</comment>
<evidence type="ECO:0000250" key="1">
    <source>
        <dbReference type="UniProtKB" id="Q9D6E4"/>
    </source>
</evidence>
<evidence type="ECO:0000256" key="2">
    <source>
        <dbReference type="SAM" id="MobiDB-lite"/>
    </source>
</evidence>
<evidence type="ECO:0000303" key="3">
    <source>
    </source>
</evidence>
<evidence type="ECO:0000305" key="4"/>
<accession>Q8N6N2</accession>
<accession>A8K0I5</accession>
<accession>Q96NP9</accession>
<reference key="1">
    <citation type="journal article" date="2004" name="Nat. Genet.">
        <title>Complete sequencing and characterization of 21,243 full-length human cDNAs.</title>
        <authorList>
            <person name="Ota T."/>
            <person name="Suzuki Y."/>
            <person name="Nishikawa T."/>
            <person name="Otsuki T."/>
            <person name="Sugiyama T."/>
            <person name="Irie R."/>
            <person name="Wakamatsu A."/>
            <person name="Hayashi K."/>
            <person name="Sato H."/>
            <person name="Nagai K."/>
            <person name="Kimura K."/>
            <person name="Makita H."/>
            <person name="Sekine M."/>
            <person name="Obayashi M."/>
            <person name="Nishi T."/>
            <person name="Shibahara T."/>
            <person name="Tanaka T."/>
            <person name="Ishii S."/>
            <person name="Yamamoto J."/>
            <person name="Saito K."/>
            <person name="Kawai Y."/>
            <person name="Isono Y."/>
            <person name="Nakamura Y."/>
            <person name="Nagahari K."/>
            <person name="Murakami K."/>
            <person name="Yasuda T."/>
            <person name="Iwayanagi T."/>
            <person name="Wagatsuma M."/>
            <person name="Shiratori A."/>
            <person name="Sudo H."/>
            <person name="Hosoiri T."/>
            <person name="Kaku Y."/>
            <person name="Kodaira H."/>
            <person name="Kondo H."/>
            <person name="Sugawara M."/>
            <person name="Takahashi M."/>
            <person name="Kanda K."/>
            <person name="Yokoi T."/>
            <person name="Furuya T."/>
            <person name="Kikkawa E."/>
            <person name="Omura Y."/>
            <person name="Abe K."/>
            <person name="Kamihara K."/>
            <person name="Katsuta N."/>
            <person name="Sato K."/>
            <person name="Tanikawa M."/>
            <person name="Yamazaki M."/>
            <person name="Ninomiya K."/>
            <person name="Ishibashi T."/>
            <person name="Yamashita H."/>
            <person name="Murakawa K."/>
            <person name="Fujimori K."/>
            <person name="Tanai H."/>
            <person name="Kimata M."/>
            <person name="Watanabe M."/>
            <person name="Hiraoka S."/>
            <person name="Chiba Y."/>
            <person name="Ishida S."/>
            <person name="Ono Y."/>
            <person name="Takiguchi S."/>
            <person name="Watanabe S."/>
            <person name="Yosida M."/>
            <person name="Hotuta T."/>
            <person name="Kusano J."/>
            <person name="Kanehori K."/>
            <person name="Takahashi-Fujii A."/>
            <person name="Hara H."/>
            <person name="Tanase T.-O."/>
            <person name="Nomura Y."/>
            <person name="Togiya S."/>
            <person name="Komai F."/>
            <person name="Hara R."/>
            <person name="Takeuchi K."/>
            <person name="Arita M."/>
            <person name="Imose N."/>
            <person name="Musashino K."/>
            <person name="Yuuki H."/>
            <person name="Oshima A."/>
            <person name="Sasaki N."/>
            <person name="Aotsuka S."/>
            <person name="Yoshikawa Y."/>
            <person name="Matsunawa H."/>
            <person name="Ichihara T."/>
            <person name="Shiohata N."/>
            <person name="Sano S."/>
            <person name="Moriya S."/>
            <person name="Momiyama H."/>
            <person name="Satoh N."/>
            <person name="Takami S."/>
            <person name="Terashima Y."/>
            <person name="Suzuki O."/>
            <person name="Nakagawa S."/>
            <person name="Senoh A."/>
            <person name="Mizoguchi H."/>
            <person name="Goto Y."/>
            <person name="Shimizu F."/>
            <person name="Wakebe H."/>
            <person name="Hishigaki H."/>
            <person name="Watanabe T."/>
            <person name="Sugiyama A."/>
            <person name="Takemoto M."/>
            <person name="Kawakami B."/>
            <person name="Yamazaki M."/>
            <person name="Watanabe K."/>
            <person name="Kumagai A."/>
            <person name="Itakura S."/>
            <person name="Fukuzumi Y."/>
            <person name="Fujimori Y."/>
            <person name="Komiyama M."/>
            <person name="Tashiro H."/>
            <person name="Tanigami A."/>
            <person name="Fujiwara T."/>
            <person name="Ono T."/>
            <person name="Yamada K."/>
            <person name="Fujii Y."/>
            <person name="Ozaki K."/>
            <person name="Hirao M."/>
            <person name="Ohmori Y."/>
            <person name="Kawabata A."/>
            <person name="Hikiji T."/>
            <person name="Kobatake N."/>
            <person name="Inagaki H."/>
            <person name="Ikema Y."/>
            <person name="Okamoto S."/>
            <person name="Okitani R."/>
            <person name="Kawakami T."/>
            <person name="Noguchi S."/>
            <person name="Itoh T."/>
            <person name="Shigeta K."/>
            <person name="Senba T."/>
            <person name="Matsumura K."/>
            <person name="Nakajima Y."/>
            <person name="Mizuno T."/>
            <person name="Morinaga M."/>
            <person name="Sasaki M."/>
            <person name="Togashi T."/>
            <person name="Oyama M."/>
            <person name="Hata H."/>
            <person name="Watanabe M."/>
            <person name="Komatsu T."/>
            <person name="Mizushima-Sugano J."/>
            <person name="Satoh T."/>
            <person name="Shirai Y."/>
            <person name="Takahashi Y."/>
            <person name="Nakagawa K."/>
            <person name="Okumura K."/>
            <person name="Nagase T."/>
            <person name="Nomura N."/>
            <person name="Kikuchi H."/>
            <person name="Masuho Y."/>
            <person name="Yamashita R."/>
            <person name="Nakai K."/>
            <person name="Yada T."/>
            <person name="Nakamura Y."/>
            <person name="Ohara O."/>
            <person name="Isogai T."/>
            <person name="Sugano S."/>
        </authorList>
    </citation>
    <scope>NUCLEOTIDE SEQUENCE [LARGE SCALE MRNA] (ISOFORMS 1 AND 2)</scope>
    <source>
        <tissue>Cerebellum</tissue>
    </source>
</reference>
<reference key="2">
    <citation type="journal article" date="2004" name="Nature">
        <title>The DNA sequence and biology of human chromosome 19.</title>
        <authorList>
            <person name="Grimwood J."/>
            <person name="Gordon L.A."/>
            <person name="Olsen A.S."/>
            <person name="Terry A."/>
            <person name="Schmutz J."/>
            <person name="Lamerdin J.E."/>
            <person name="Hellsten U."/>
            <person name="Goodstein D."/>
            <person name="Couronne O."/>
            <person name="Tran-Gyamfi M."/>
            <person name="Aerts A."/>
            <person name="Altherr M."/>
            <person name="Ashworth L."/>
            <person name="Bajorek E."/>
            <person name="Black S."/>
            <person name="Branscomb E."/>
            <person name="Caenepeel S."/>
            <person name="Carrano A.V."/>
            <person name="Caoile C."/>
            <person name="Chan Y.M."/>
            <person name="Christensen M."/>
            <person name="Cleland C.A."/>
            <person name="Copeland A."/>
            <person name="Dalin E."/>
            <person name="Dehal P."/>
            <person name="Denys M."/>
            <person name="Detter J.C."/>
            <person name="Escobar J."/>
            <person name="Flowers D."/>
            <person name="Fotopulos D."/>
            <person name="Garcia C."/>
            <person name="Georgescu A.M."/>
            <person name="Glavina T."/>
            <person name="Gomez M."/>
            <person name="Gonzales E."/>
            <person name="Groza M."/>
            <person name="Hammon N."/>
            <person name="Hawkins T."/>
            <person name="Haydu L."/>
            <person name="Ho I."/>
            <person name="Huang W."/>
            <person name="Israni S."/>
            <person name="Jett J."/>
            <person name="Kadner K."/>
            <person name="Kimball H."/>
            <person name="Kobayashi A."/>
            <person name="Larionov V."/>
            <person name="Leem S.-H."/>
            <person name="Lopez F."/>
            <person name="Lou Y."/>
            <person name="Lowry S."/>
            <person name="Malfatti S."/>
            <person name="Martinez D."/>
            <person name="McCready P.M."/>
            <person name="Medina C."/>
            <person name="Morgan J."/>
            <person name="Nelson K."/>
            <person name="Nolan M."/>
            <person name="Ovcharenko I."/>
            <person name="Pitluck S."/>
            <person name="Pollard M."/>
            <person name="Popkie A.P."/>
            <person name="Predki P."/>
            <person name="Quan G."/>
            <person name="Ramirez L."/>
            <person name="Rash S."/>
            <person name="Retterer J."/>
            <person name="Rodriguez A."/>
            <person name="Rogers S."/>
            <person name="Salamov A."/>
            <person name="Salazar A."/>
            <person name="She X."/>
            <person name="Smith D."/>
            <person name="Slezak T."/>
            <person name="Solovyev V."/>
            <person name="Thayer N."/>
            <person name="Tice H."/>
            <person name="Tsai M."/>
            <person name="Ustaszewska A."/>
            <person name="Vo N."/>
            <person name="Wagner M."/>
            <person name="Wheeler J."/>
            <person name="Wu K."/>
            <person name="Xie G."/>
            <person name="Yang J."/>
            <person name="Dubchak I."/>
            <person name="Furey T.S."/>
            <person name="DeJong P."/>
            <person name="Dickson M."/>
            <person name="Gordon D."/>
            <person name="Eichler E.E."/>
            <person name="Pennacchio L.A."/>
            <person name="Richardson P."/>
            <person name="Stubbs L."/>
            <person name="Rokhsar D.S."/>
            <person name="Myers R.M."/>
            <person name="Rubin E.M."/>
            <person name="Lucas S.M."/>
        </authorList>
    </citation>
    <scope>NUCLEOTIDE SEQUENCE [LARGE SCALE GENOMIC DNA]</scope>
</reference>
<reference key="3">
    <citation type="submission" date="2005-07" db="EMBL/GenBank/DDBJ databases">
        <authorList>
            <person name="Mural R.J."/>
            <person name="Istrail S."/>
            <person name="Sutton G.G."/>
            <person name="Florea L."/>
            <person name="Halpern A.L."/>
            <person name="Mobarry C.M."/>
            <person name="Lippert R."/>
            <person name="Walenz B."/>
            <person name="Shatkay H."/>
            <person name="Dew I."/>
            <person name="Miller J.R."/>
            <person name="Flanigan M.J."/>
            <person name="Edwards N.J."/>
            <person name="Bolanos R."/>
            <person name="Fasulo D."/>
            <person name="Halldorsson B.V."/>
            <person name="Hannenhalli S."/>
            <person name="Turner R."/>
            <person name="Yooseph S."/>
            <person name="Lu F."/>
            <person name="Nusskern D.R."/>
            <person name="Shue B.C."/>
            <person name="Zheng X.H."/>
            <person name="Zhong F."/>
            <person name="Delcher A.L."/>
            <person name="Huson D.H."/>
            <person name="Kravitz S.A."/>
            <person name="Mouchard L."/>
            <person name="Reinert K."/>
            <person name="Remington K.A."/>
            <person name="Clark A.G."/>
            <person name="Waterman M.S."/>
            <person name="Eichler E.E."/>
            <person name="Adams M.D."/>
            <person name="Hunkapiller M.W."/>
            <person name="Myers E.W."/>
            <person name="Venter J.C."/>
        </authorList>
    </citation>
    <scope>NUCLEOTIDE SEQUENCE [LARGE SCALE GENOMIC DNA]</scope>
</reference>
<reference key="4">
    <citation type="journal article" date="2004" name="Genome Res.">
        <title>The status, quality, and expansion of the NIH full-length cDNA project: the Mammalian Gene Collection (MGC).</title>
        <authorList>
            <consortium name="The MGC Project Team"/>
        </authorList>
    </citation>
    <scope>NUCLEOTIDE SEQUENCE [LARGE SCALE MRNA] (ISOFORM 1)</scope>
    <source>
        <tissue>Brain</tissue>
    </source>
</reference>
<organism>
    <name type="scientific">Homo sapiens</name>
    <name type="common">Human</name>
    <dbReference type="NCBI Taxonomy" id="9606"/>
    <lineage>
        <taxon>Eukaryota</taxon>
        <taxon>Metazoa</taxon>
        <taxon>Chordata</taxon>
        <taxon>Craniata</taxon>
        <taxon>Vertebrata</taxon>
        <taxon>Euteleostomi</taxon>
        <taxon>Mammalia</taxon>
        <taxon>Eutheria</taxon>
        <taxon>Euarchontoglires</taxon>
        <taxon>Primates</taxon>
        <taxon>Haplorrhini</taxon>
        <taxon>Catarrhini</taxon>
        <taxon>Hominidae</taxon>
        <taxon>Homo</taxon>
    </lineage>
</organism>
<sequence>MQRGALSPVLMLSAAPEPPPRPPPALSPPGSGPGSGSRHGSARPGPTPEPSGSLGAALDSSLRAAVAFKAEGQRCYREKKFREAIGKYHRALLQLKAAQGARPSGLPAPAPGPTSSPGPARLSEEQRRLVESTEVECYDSLTACLLQSELVNYERVREYCLKVLEKQQGNFKATYRAGIAFYHLGDYARALRYLQEARSREPTDTNVLRYIQLTQLKMNRCSLQREDSGAGSQTRDVIG</sequence>
<proteinExistence type="evidence at protein level"/>
<keyword id="KW-0025">Alternative splicing</keyword>
<keyword id="KW-0597">Phosphoprotein</keyword>
<keyword id="KW-1267">Proteomics identification</keyword>
<keyword id="KW-1185">Reference proteome</keyword>
<keyword id="KW-0677">Repeat</keyword>
<keyword id="KW-0802">TPR repeat</keyword>
<name>TTC9B_HUMAN</name>
<protein>
    <recommendedName>
        <fullName>Tetratricopeptide repeat protein 9B</fullName>
        <shortName>TPR repeat protein 9B</shortName>
    </recommendedName>
</protein>
<gene>
    <name type="primary">TTC9B</name>
</gene>
<feature type="chain" id="PRO_0000294459" description="Tetratricopeptide repeat protein 9B">
    <location>
        <begin position="1"/>
        <end position="239"/>
    </location>
</feature>
<feature type="repeat" description="TPR 1">
    <location>
        <begin position="65"/>
        <end position="99"/>
    </location>
</feature>
<feature type="repeat" description="TPR 2">
    <location>
        <begin position="171"/>
        <end position="204"/>
    </location>
</feature>
<feature type="region of interest" description="Disordered" evidence="2">
    <location>
        <begin position="1"/>
        <end position="57"/>
    </location>
</feature>
<feature type="region of interest" description="Disordered" evidence="2">
    <location>
        <begin position="99"/>
        <end position="126"/>
    </location>
</feature>
<feature type="compositionally biased region" description="Pro residues" evidence="2">
    <location>
        <begin position="16"/>
        <end position="31"/>
    </location>
</feature>
<feature type="compositionally biased region" description="Pro residues" evidence="2">
    <location>
        <begin position="106"/>
        <end position="116"/>
    </location>
</feature>
<feature type="modified residue" description="Phosphoserine" evidence="1">
    <location>
        <position position="7"/>
    </location>
</feature>
<feature type="modified residue" description="Phosphoserine" evidence="1">
    <location>
        <position position="27"/>
    </location>
</feature>
<feature type="splice variant" id="VSP_026650" description="In isoform 2." evidence="3">
    <original>ACLLQSELVNYERVREYCLKVLEKQQGNFKATYRAGIAFYHLGDYARALRYLQEARSREPTDTNVLRYIQLTQLKMNRCSLQREDSGAGSQTRDVIG</original>
    <variation>GTPSGGGGMGHEGRGQSGELGDLGARGPGAEGSRAVGFSGSLQSLIKERD</variation>
    <location>
        <begin position="143"/>
        <end position="239"/>
    </location>
</feature>
<feature type="sequence variant" id="VAR_052625" description="In dbSNP:rs11553464.">
    <original>L</original>
    <variation>P</variation>
    <location>
        <position position="223"/>
    </location>
</feature>